<keyword id="KW-0648">Protein biosynthesis</keyword>
<keyword id="KW-0808">Transferase</keyword>
<gene>
    <name evidence="1" type="primary">fmt</name>
    <name type="ordered locus">PA14_00190</name>
</gene>
<feature type="chain" id="PRO_1000020129" description="Methionyl-tRNA formyltransferase">
    <location>
        <begin position="1"/>
        <end position="314"/>
    </location>
</feature>
<feature type="binding site" evidence="1">
    <location>
        <begin position="113"/>
        <end position="116"/>
    </location>
    <ligand>
        <name>(6S)-5,6,7,8-tetrahydrofolate</name>
        <dbReference type="ChEBI" id="CHEBI:57453"/>
    </ligand>
</feature>
<sequence length="314" mass="33032">MSQALRIVFAGTPEFAAEHLKALLDTPHRIVAVYTQPDRPAGRGQKLMPSAVKSLALEHGLPVMQPQSLRNAEAQAELAALRADLMVVVAYGLILPQAVLDIPRLGCINSHASLLPRWRGAAPIQRAVEAGDAESGVTVMQMEAGLDTGPMLLKVSTPISAADTGGSLHDRLAALGPKAVVEAIAGLAAGTLHGEDQDDALATYAHKLNKDEARLDWSRPAVELERQVRAFTPWPVCHTSLADAPLKVLGASLGQGSGAPGTILEASRDGLLVACGEGALRLTRLQVPGGKPLAFADLYNSRREQFATGQVLGQ</sequence>
<reference key="1">
    <citation type="journal article" date="2006" name="Genome Biol.">
        <title>Genomic analysis reveals that Pseudomonas aeruginosa virulence is combinatorial.</title>
        <authorList>
            <person name="Lee D.G."/>
            <person name="Urbach J.M."/>
            <person name="Wu G."/>
            <person name="Liberati N.T."/>
            <person name="Feinbaum R.L."/>
            <person name="Miyata S."/>
            <person name="Diggins L.T."/>
            <person name="He J."/>
            <person name="Saucier M."/>
            <person name="Deziel E."/>
            <person name="Friedman L."/>
            <person name="Li L."/>
            <person name="Grills G."/>
            <person name="Montgomery K."/>
            <person name="Kucherlapati R."/>
            <person name="Rahme L.G."/>
            <person name="Ausubel F.M."/>
        </authorList>
    </citation>
    <scope>NUCLEOTIDE SEQUENCE [LARGE SCALE GENOMIC DNA]</scope>
    <source>
        <strain>UCBPP-PA14</strain>
    </source>
</reference>
<evidence type="ECO:0000255" key="1">
    <source>
        <dbReference type="HAMAP-Rule" id="MF_00182"/>
    </source>
</evidence>
<name>FMT_PSEAB</name>
<organism>
    <name type="scientific">Pseudomonas aeruginosa (strain UCBPP-PA14)</name>
    <dbReference type="NCBI Taxonomy" id="208963"/>
    <lineage>
        <taxon>Bacteria</taxon>
        <taxon>Pseudomonadati</taxon>
        <taxon>Pseudomonadota</taxon>
        <taxon>Gammaproteobacteria</taxon>
        <taxon>Pseudomonadales</taxon>
        <taxon>Pseudomonadaceae</taxon>
        <taxon>Pseudomonas</taxon>
    </lineage>
</organism>
<dbReference type="EC" id="2.1.2.9" evidence="1"/>
<dbReference type="EMBL" id="CP000438">
    <property type="protein sequence ID" value="ABJ14974.1"/>
    <property type="molecule type" value="Genomic_DNA"/>
</dbReference>
<dbReference type="RefSeq" id="WP_003142204.1">
    <property type="nucleotide sequence ID" value="NZ_CP034244.1"/>
</dbReference>
<dbReference type="SMR" id="Q02V63"/>
<dbReference type="KEGG" id="pau:PA14_00190"/>
<dbReference type="PseudoCAP" id="PA14_00190"/>
<dbReference type="HOGENOM" id="CLU_033347_1_2_6"/>
<dbReference type="BioCyc" id="PAER208963:G1G74-18-MONOMER"/>
<dbReference type="Proteomes" id="UP000000653">
    <property type="component" value="Chromosome"/>
</dbReference>
<dbReference type="GO" id="GO:0005829">
    <property type="term" value="C:cytosol"/>
    <property type="evidence" value="ECO:0007669"/>
    <property type="project" value="TreeGrafter"/>
</dbReference>
<dbReference type="GO" id="GO:0004479">
    <property type="term" value="F:methionyl-tRNA formyltransferase activity"/>
    <property type="evidence" value="ECO:0007669"/>
    <property type="project" value="UniProtKB-UniRule"/>
</dbReference>
<dbReference type="CDD" id="cd08646">
    <property type="entry name" value="FMT_core_Met-tRNA-FMT_N"/>
    <property type="match status" value="1"/>
</dbReference>
<dbReference type="CDD" id="cd08704">
    <property type="entry name" value="Met_tRNA_FMT_C"/>
    <property type="match status" value="1"/>
</dbReference>
<dbReference type="FunFam" id="3.10.25.10:FF:000009">
    <property type="entry name" value="Methionyl-tRNA formyltransferase"/>
    <property type="match status" value="1"/>
</dbReference>
<dbReference type="FunFam" id="3.40.50.12230:FF:000001">
    <property type="entry name" value="Methionyl-tRNA formyltransferase"/>
    <property type="match status" value="1"/>
</dbReference>
<dbReference type="FunFam" id="3.40.50.170:FF:000003">
    <property type="entry name" value="Methionyl-tRNA formyltransferase"/>
    <property type="match status" value="1"/>
</dbReference>
<dbReference type="Gene3D" id="3.10.25.10">
    <property type="entry name" value="Formyl transferase, C-terminal domain"/>
    <property type="match status" value="1"/>
</dbReference>
<dbReference type="Gene3D" id="3.40.50.170">
    <property type="entry name" value="Formyl transferase, N-terminal domain"/>
    <property type="match status" value="1"/>
</dbReference>
<dbReference type="HAMAP" id="MF_00182">
    <property type="entry name" value="Formyl_trans"/>
    <property type="match status" value="1"/>
</dbReference>
<dbReference type="InterPro" id="IPR005794">
    <property type="entry name" value="Fmt"/>
</dbReference>
<dbReference type="InterPro" id="IPR005793">
    <property type="entry name" value="Formyl_trans_C"/>
</dbReference>
<dbReference type="InterPro" id="IPR037022">
    <property type="entry name" value="Formyl_trans_C_sf"/>
</dbReference>
<dbReference type="InterPro" id="IPR002376">
    <property type="entry name" value="Formyl_transf_N"/>
</dbReference>
<dbReference type="InterPro" id="IPR036477">
    <property type="entry name" value="Formyl_transf_N_sf"/>
</dbReference>
<dbReference type="InterPro" id="IPR011034">
    <property type="entry name" value="Formyl_transferase-like_C_sf"/>
</dbReference>
<dbReference type="InterPro" id="IPR001555">
    <property type="entry name" value="GART_AS"/>
</dbReference>
<dbReference type="InterPro" id="IPR044135">
    <property type="entry name" value="Met-tRNA-FMT_C"/>
</dbReference>
<dbReference type="InterPro" id="IPR041711">
    <property type="entry name" value="Met-tRNA-FMT_N"/>
</dbReference>
<dbReference type="NCBIfam" id="TIGR00460">
    <property type="entry name" value="fmt"/>
    <property type="match status" value="1"/>
</dbReference>
<dbReference type="PANTHER" id="PTHR11138">
    <property type="entry name" value="METHIONYL-TRNA FORMYLTRANSFERASE"/>
    <property type="match status" value="1"/>
</dbReference>
<dbReference type="PANTHER" id="PTHR11138:SF5">
    <property type="entry name" value="METHIONYL-TRNA FORMYLTRANSFERASE, MITOCHONDRIAL"/>
    <property type="match status" value="1"/>
</dbReference>
<dbReference type="Pfam" id="PF02911">
    <property type="entry name" value="Formyl_trans_C"/>
    <property type="match status" value="1"/>
</dbReference>
<dbReference type="Pfam" id="PF00551">
    <property type="entry name" value="Formyl_trans_N"/>
    <property type="match status" value="1"/>
</dbReference>
<dbReference type="SUPFAM" id="SSF50486">
    <property type="entry name" value="FMT C-terminal domain-like"/>
    <property type="match status" value="1"/>
</dbReference>
<dbReference type="SUPFAM" id="SSF53328">
    <property type="entry name" value="Formyltransferase"/>
    <property type="match status" value="1"/>
</dbReference>
<dbReference type="PROSITE" id="PS00373">
    <property type="entry name" value="GART"/>
    <property type="match status" value="1"/>
</dbReference>
<accession>Q02V63</accession>
<comment type="function">
    <text evidence="1">Attaches a formyl group to the free amino group of methionyl-tRNA(fMet). The formyl group appears to play a dual role in the initiator identity of N-formylmethionyl-tRNA by promoting its recognition by IF2 and preventing the misappropriation of this tRNA by the elongation apparatus.</text>
</comment>
<comment type="catalytic activity">
    <reaction evidence="1">
        <text>L-methionyl-tRNA(fMet) + (6R)-10-formyltetrahydrofolate = N-formyl-L-methionyl-tRNA(fMet) + (6S)-5,6,7,8-tetrahydrofolate + H(+)</text>
        <dbReference type="Rhea" id="RHEA:24380"/>
        <dbReference type="Rhea" id="RHEA-COMP:9952"/>
        <dbReference type="Rhea" id="RHEA-COMP:9953"/>
        <dbReference type="ChEBI" id="CHEBI:15378"/>
        <dbReference type="ChEBI" id="CHEBI:57453"/>
        <dbReference type="ChEBI" id="CHEBI:78530"/>
        <dbReference type="ChEBI" id="CHEBI:78844"/>
        <dbReference type="ChEBI" id="CHEBI:195366"/>
        <dbReference type="EC" id="2.1.2.9"/>
    </reaction>
</comment>
<comment type="similarity">
    <text evidence="1">Belongs to the Fmt family.</text>
</comment>
<protein>
    <recommendedName>
        <fullName evidence="1">Methionyl-tRNA formyltransferase</fullName>
        <ecNumber evidence="1">2.1.2.9</ecNumber>
    </recommendedName>
</protein>
<proteinExistence type="inferred from homology"/>